<accession>P0AAI4</accession>
<accession>P28691</accession>
<proteinExistence type="inferred from homology"/>
<name>FTSH_SHIFL</name>
<protein>
    <recommendedName>
        <fullName evidence="1">ATP-dependent zinc metalloprotease FtsH</fullName>
        <ecNumber evidence="1">3.4.24.-</ecNumber>
    </recommendedName>
</protein>
<keyword id="KW-0067">ATP-binding</keyword>
<keyword id="KW-0997">Cell inner membrane</keyword>
<keyword id="KW-1003">Cell membrane</keyword>
<keyword id="KW-0378">Hydrolase</keyword>
<keyword id="KW-0472">Membrane</keyword>
<keyword id="KW-0479">Metal-binding</keyword>
<keyword id="KW-0482">Metalloprotease</keyword>
<keyword id="KW-0547">Nucleotide-binding</keyword>
<keyword id="KW-0645">Protease</keyword>
<keyword id="KW-1185">Reference proteome</keyword>
<keyword id="KW-0812">Transmembrane</keyword>
<keyword id="KW-1133">Transmembrane helix</keyword>
<keyword id="KW-0862">Zinc</keyword>
<sequence length="644" mass="70708">MAKNLILWLVIAVVLMSVFQSFGPSESNGRKVDYSTFLQEVNNDQVREARINGREINVTKKDSNRYTTYIPVQDPKLLDNLLTKNVKVVGEPPEEPSLLASIFISWFPMLLLIGVWIFFMRQMQGGGGKGAMSFGKSKARMLTEDQIKTTFADVAGCDEAKEEVAELVEYLREPSRFQKLGGKIPKGVLMVGPPGTGKTLLAKAIAGEAKVPFFTISGSDFVEMFVGVGASRVRDMFEQAKKAAPCIIFIDEIDAVGRQRGAGLGGGHDEREQTLNQMLVEMDGFEGNEGIIVIAATNRPDVLDPALLRPGRFDRQVVVGLPDVRGREQILKVHMRRVPLAPDIDAAIIARGTPGFSGADLANLVNEAALFAARGNKRVVSMVEFEKAKDKIMMGAERRSMVMTEAQKESTAYHEAGHAIIGRLVPEHDPVHKVTIIPRGRALGVTFFLPEGDAISASRQKLESQISTLYGGRLAEEIIYGPEHVSTGASNDIKVATNLARNMVTQWGFSEKLGPLLYAEEEGEVFLGRSVAKAKHMSDETARIIDQEVKALIERNYNRARQLLTDNMDILHAMKDALMKYETIDAPQIDDLMARRDVRPPAGWEEPGASNNSGDNGSPKAPRPVDEPRTPNPGNTMSEQLGDK</sequence>
<feature type="chain" id="PRO_0000084649" description="ATP-dependent zinc metalloprotease FtsH">
    <location>
        <begin position="1"/>
        <end position="644"/>
    </location>
</feature>
<feature type="topological domain" description="Cytoplasmic" evidence="1">
    <location>
        <begin position="1"/>
        <end position="4"/>
    </location>
</feature>
<feature type="transmembrane region" description="Helical" evidence="1">
    <location>
        <begin position="5"/>
        <end position="25"/>
    </location>
</feature>
<feature type="topological domain" description="Periplasmic" evidence="1">
    <location>
        <begin position="26"/>
        <end position="98"/>
    </location>
</feature>
<feature type="transmembrane region" description="Helical" evidence="1">
    <location>
        <begin position="99"/>
        <end position="119"/>
    </location>
</feature>
<feature type="topological domain" description="Cytoplasmic" evidence="1">
    <location>
        <begin position="120"/>
        <end position="644"/>
    </location>
</feature>
<feature type="region of interest" description="Disordered" evidence="2">
    <location>
        <begin position="598"/>
        <end position="644"/>
    </location>
</feature>
<feature type="compositionally biased region" description="Polar residues" evidence="2">
    <location>
        <begin position="632"/>
        <end position="644"/>
    </location>
</feature>
<feature type="active site" evidence="1">
    <location>
        <position position="415"/>
    </location>
</feature>
<feature type="binding site" evidence="1">
    <location>
        <begin position="192"/>
        <end position="199"/>
    </location>
    <ligand>
        <name>ATP</name>
        <dbReference type="ChEBI" id="CHEBI:30616"/>
    </ligand>
</feature>
<feature type="binding site" evidence="1">
    <location>
        <position position="414"/>
    </location>
    <ligand>
        <name>Zn(2+)</name>
        <dbReference type="ChEBI" id="CHEBI:29105"/>
        <note>catalytic</note>
    </ligand>
</feature>
<feature type="binding site" evidence="1">
    <location>
        <position position="418"/>
    </location>
    <ligand>
        <name>Zn(2+)</name>
        <dbReference type="ChEBI" id="CHEBI:29105"/>
        <note>catalytic</note>
    </ligand>
</feature>
<feature type="binding site" evidence="1">
    <location>
        <position position="492"/>
    </location>
    <ligand>
        <name>Zn(2+)</name>
        <dbReference type="ChEBI" id="CHEBI:29105"/>
        <note>catalytic</note>
    </ligand>
</feature>
<organism>
    <name type="scientific">Shigella flexneri</name>
    <dbReference type="NCBI Taxonomy" id="623"/>
    <lineage>
        <taxon>Bacteria</taxon>
        <taxon>Pseudomonadati</taxon>
        <taxon>Pseudomonadota</taxon>
        <taxon>Gammaproteobacteria</taxon>
        <taxon>Enterobacterales</taxon>
        <taxon>Enterobacteriaceae</taxon>
        <taxon>Shigella</taxon>
    </lineage>
</organism>
<evidence type="ECO:0000255" key="1">
    <source>
        <dbReference type="HAMAP-Rule" id="MF_01458"/>
    </source>
</evidence>
<evidence type="ECO:0000256" key="2">
    <source>
        <dbReference type="SAM" id="MobiDB-lite"/>
    </source>
</evidence>
<comment type="function">
    <text evidence="1">Acts as a processive, ATP-dependent zinc metallopeptidase for both cytoplasmic and membrane proteins. Plays a role in the quality control of integral membrane proteins.</text>
</comment>
<comment type="cofactor">
    <cofactor evidence="1">
        <name>Zn(2+)</name>
        <dbReference type="ChEBI" id="CHEBI:29105"/>
    </cofactor>
    <text evidence="1">Binds 1 zinc ion per subunit.</text>
</comment>
<comment type="subunit">
    <text evidence="1">Homohexamer.</text>
</comment>
<comment type="subcellular location">
    <subcellularLocation>
        <location evidence="1">Cell inner membrane</location>
        <topology evidence="1">Multi-pass membrane protein</topology>
        <orientation evidence="1">Cytoplasmic side</orientation>
    </subcellularLocation>
</comment>
<comment type="similarity">
    <text evidence="1">In the central section; belongs to the AAA ATPase family.</text>
</comment>
<comment type="similarity">
    <text evidence="1">In the C-terminal section; belongs to the peptidase M41 family.</text>
</comment>
<gene>
    <name evidence="1" type="primary">ftsH</name>
    <name type="synonym">hflB</name>
    <name type="ordered locus">SF3218</name>
    <name type="ordered locus">S3436</name>
</gene>
<dbReference type="EC" id="3.4.24.-" evidence="1"/>
<dbReference type="EMBL" id="AE005674">
    <property type="protein sequence ID" value="AAN44684.1"/>
    <property type="molecule type" value="Genomic_DNA"/>
</dbReference>
<dbReference type="EMBL" id="AE014073">
    <property type="protein sequence ID" value="AAP18498.1"/>
    <property type="molecule type" value="Genomic_DNA"/>
</dbReference>
<dbReference type="RefSeq" id="NP_708977.1">
    <property type="nucleotide sequence ID" value="NC_004337.2"/>
</dbReference>
<dbReference type="RefSeq" id="WP_001107467.1">
    <property type="nucleotide sequence ID" value="NZ_WPGW01000004.1"/>
</dbReference>
<dbReference type="SMR" id="P0AAI4"/>
<dbReference type="STRING" id="198214.SF3218"/>
<dbReference type="MEROPS" id="M41.001"/>
<dbReference type="MoonProt" id="P0AAI4"/>
<dbReference type="PaxDb" id="198214-SF3218"/>
<dbReference type="GeneID" id="1027156"/>
<dbReference type="GeneID" id="93778803"/>
<dbReference type="KEGG" id="sfl:SF3218"/>
<dbReference type="KEGG" id="sfx:S3436"/>
<dbReference type="PATRIC" id="fig|198214.7.peg.3818"/>
<dbReference type="HOGENOM" id="CLU_000688_16_2_6"/>
<dbReference type="Proteomes" id="UP000001006">
    <property type="component" value="Chromosome"/>
</dbReference>
<dbReference type="Proteomes" id="UP000002673">
    <property type="component" value="Chromosome"/>
</dbReference>
<dbReference type="GO" id="GO:0005886">
    <property type="term" value="C:plasma membrane"/>
    <property type="evidence" value="ECO:0007669"/>
    <property type="project" value="UniProtKB-SubCell"/>
</dbReference>
<dbReference type="GO" id="GO:0005524">
    <property type="term" value="F:ATP binding"/>
    <property type="evidence" value="ECO:0007669"/>
    <property type="project" value="UniProtKB-UniRule"/>
</dbReference>
<dbReference type="GO" id="GO:0016887">
    <property type="term" value="F:ATP hydrolysis activity"/>
    <property type="evidence" value="ECO:0007669"/>
    <property type="project" value="UniProtKB-UniRule"/>
</dbReference>
<dbReference type="GO" id="GO:0004176">
    <property type="term" value="F:ATP-dependent peptidase activity"/>
    <property type="evidence" value="ECO:0007669"/>
    <property type="project" value="InterPro"/>
</dbReference>
<dbReference type="GO" id="GO:0004222">
    <property type="term" value="F:metalloendopeptidase activity"/>
    <property type="evidence" value="ECO:0007669"/>
    <property type="project" value="InterPro"/>
</dbReference>
<dbReference type="GO" id="GO:0008270">
    <property type="term" value="F:zinc ion binding"/>
    <property type="evidence" value="ECO:0007669"/>
    <property type="project" value="UniProtKB-UniRule"/>
</dbReference>
<dbReference type="GO" id="GO:0030163">
    <property type="term" value="P:protein catabolic process"/>
    <property type="evidence" value="ECO:0007669"/>
    <property type="project" value="UniProtKB-UniRule"/>
</dbReference>
<dbReference type="GO" id="GO:0006508">
    <property type="term" value="P:proteolysis"/>
    <property type="evidence" value="ECO:0007669"/>
    <property type="project" value="UniProtKB-KW"/>
</dbReference>
<dbReference type="CDD" id="cd19501">
    <property type="entry name" value="RecA-like_FtsH"/>
    <property type="match status" value="1"/>
</dbReference>
<dbReference type="FunFam" id="1.10.8.60:FF:000001">
    <property type="entry name" value="ATP-dependent zinc metalloprotease FtsH"/>
    <property type="match status" value="1"/>
</dbReference>
<dbReference type="FunFam" id="1.20.58.760:FF:000001">
    <property type="entry name" value="ATP-dependent zinc metalloprotease FtsH"/>
    <property type="match status" value="1"/>
</dbReference>
<dbReference type="FunFam" id="3.30.720.210:FF:000001">
    <property type="entry name" value="ATP-dependent zinc metalloprotease FtsH"/>
    <property type="match status" value="1"/>
</dbReference>
<dbReference type="FunFam" id="3.40.50.300:FF:000001">
    <property type="entry name" value="ATP-dependent zinc metalloprotease FtsH"/>
    <property type="match status" value="1"/>
</dbReference>
<dbReference type="Gene3D" id="1.10.8.60">
    <property type="match status" value="1"/>
</dbReference>
<dbReference type="Gene3D" id="3.30.720.210">
    <property type="match status" value="1"/>
</dbReference>
<dbReference type="Gene3D" id="3.40.50.300">
    <property type="entry name" value="P-loop containing nucleotide triphosphate hydrolases"/>
    <property type="match status" value="1"/>
</dbReference>
<dbReference type="Gene3D" id="1.20.58.760">
    <property type="entry name" value="Peptidase M41"/>
    <property type="match status" value="1"/>
</dbReference>
<dbReference type="HAMAP" id="MF_01458">
    <property type="entry name" value="FtsH"/>
    <property type="match status" value="1"/>
</dbReference>
<dbReference type="InterPro" id="IPR003593">
    <property type="entry name" value="AAA+_ATPase"/>
</dbReference>
<dbReference type="InterPro" id="IPR041569">
    <property type="entry name" value="AAA_lid_3"/>
</dbReference>
<dbReference type="InterPro" id="IPR003959">
    <property type="entry name" value="ATPase_AAA_core"/>
</dbReference>
<dbReference type="InterPro" id="IPR003960">
    <property type="entry name" value="ATPase_AAA_CS"/>
</dbReference>
<dbReference type="InterPro" id="IPR005936">
    <property type="entry name" value="FtsH"/>
</dbReference>
<dbReference type="InterPro" id="IPR027417">
    <property type="entry name" value="P-loop_NTPase"/>
</dbReference>
<dbReference type="InterPro" id="IPR011546">
    <property type="entry name" value="Pept_M41_FtsH_extracell"/>
</dbReference>
<dbReference type="InterPro" id="IPR000642">
    <property type="entry name" value="Peptidase_M41"/>
</dbReference>
<dbReference type="InterPro" id="IPR037219">
    <property type="entry name" value="Peptidase_M41-like"/>
</dbReference>
<dbReference type="NCBIfam" id="TIGR01241">
    <property type="entry name" value="FtsH_fam"/>
    <property type="match status" value="1"/>
</dbReference>
<dbReference type="NCBIfam" id="NF008004">
    <property type="entry name" value="PRK10733.1"/>
    <property type="match status" value="1"/>
</dbReference>
<dbReference type="PANTHER" id="PTHR23076:SF97">
    <property type="entry name" value="ATP-DEPENDENT ZINC METALLOPROTEASE YME1L1"/>
    <property type="match status" value="1"/>
</dbReference>
<dbReference type="PANTHER" id="PTHR23076">
    <property type="entry name" value="METALLOPROTEASE M41 FTSH"/>
    <property type="match status" value="1"/>
</dbReference>
<dbReference type="Pfam" id="PF00004">
    <property type="entry name" value="AAA"/>
    <property type="match status" value="1"/>
</dbReference>
<dbReference type="Pfam" id="PF17862">
    <property type="entry name" value="AAA_lid_3"/>
    <property type="match status" value="1"/>
</dbReference>
<dbReference type="Pfam" id="PF06480">
    <property type="entry name" value="FtsH_ext"/>
    <property type="match status" value="1"/>
</dbReference>
<dbReference type="Pfam" id="PF01434">
    <property type="entry name" value="Peptidase_M41"/>
    <property type="match status" value="1"/>
</dbReference>
<dbReference type="SMART" id="SM00382">
    <property type="entry name" value="AAA"/>
    <property type="match status" value="1"/>
</dbReference>
<dbReference type="SUPFAM" id="SSF140990">
    <property type="entry name" value="FtsH protease domain-like"/>
    <property type="match status" value="1"/>
</dbReference>
<dbReference type="SUPFAM" id="SSF52540">
    <property type="entry name" value="P-loop containing nucleoside triphosphate hydrolases"/>
    <property type="match status" value="1"/>
</dbReference>
<dbReference type="PROSITE" id="PS00674">
    <property type="entry name" value="AAA"/>
    <property type="match status" value="1"/>
</dbReference>
<reference key="1">
    <citation type="journal article" date="2002" name="Nucleic Acids Res.">
        <title>Genome sequence of Shigella flexneri 2a: insights into pathogenicity through comparison with genomes of Escherichia coli K12 and O157.</title>
        <authorList>
            <person name="Jin Q."/>
            <person name="Yuan Z."/>
            <person name="Xu J."/>
            <person name="Wang Y."/>
            <person name="Shen Y."/>
            <person name="Lu W."/>
            <person name="Wang J."/>
            <person name="Liu H."/>
            <person name="Yang J."/>
            <person name="Yang F."/>
            <person name="Zhang X."/>
            <person name="Zhang J."/>
            <person name="Yang G."/>
            <person name="Wu H."/>
            <person name="Qu D."/>
            <person name="Dong J."/>
            <person name="Sun L."/>
            <person name="Xue Y."/>
            <person name="Zhao A."/>
            <person name="Gao Y."/>
            <person name="Zhu J."/>
            <person name="Kan B."/>
            <person name="Ding K."/>
            <person name="Chen S."/>
            <person name="Cheng H."/>
            <person name="Yao Z."/>
            <person name="He B."/>
            <person name="Chen R."/>
            <person name="Ma D."/>
            <person name="Qiang B."/>
            <person name="Wen Y."/>
            <person name="Hou Y."/>
            <person name="Yu J."/>
        </authorList>
    </citation>
    <scope>NUCLEOTIDE SEQUENCE [LARGE SCALE GENOMIC DNA]</scope>
    <source>
        <strain>301 / Serotype 2a</strain>
    </source>
</reference>
<reference key="2">
    <citation type="journal article" date="2003" name="Infect. Immun.">
        <title>Complete genome sequence and comparative genomics of Shigella flexneri serotype 2a strain 2457T.</title>
        <authorList>
            <person name="Wei J."/>
            <person name="Goldberg M.B."/>
            <person name="Burland V."/>
            <person name="Venkatesan M.M."/>
            <person name="Deng W."/>
            <person name="Fournier G."/>
            <person name="Mayhew G.F."/>
            <person name="Plunkett G. III"/>
            <person name="Rose D.J."/>
            <person name="Darling A."/>
            <person name="Mau B."/>
            <person name="Perna N.T."/>
            <person name="Payne S.M."/>
            <person name="Runyen-Janecky L.J."/>
            <person name="Zhou S."/>
            <person name="Schwartz D.C."/>
            <person name="Blattner F.R."/>
        </authorList>
    </citation>
    <scope>NUCLEOTIDE SEQUENCE [LARGE SCALE GENOMIC DNA]</scope>
    <source>
        <strain>ATCC 700930 / 2457T / Serotype 2a</strain>
    </source>
</reference>